<sequence>MSVNLLKETGPREVFCGLTSIVWLHRRMPDAFFLVVGSRTCAHLIQSAAGVMIFAEPRFGTAILSERDLAGLADAQDELDRVARELLERRPEIRTLFLVGSCPSEVIKLDLARAAERLNDELRGRVQVVNYSGSGIETTFTQGEDGALSALVPLLPSTDQRQLLMVGTLADAVEDRLTHLFGRIGIDSVCSLPPRKSTELPAVGPGTTVLLTQPYLTTTARLLRDRGARVLTAPFPLGAEGSRSWMEAAAKDFQINADQVASVLDPLVARAQSALAPHREILNGKRIFLLPESQLELPLARFLQRECGMELVEVGTPYLNREQMAEELALLPEGTSVMEGQHVENQLDRVRATQPDLVVCGMGLANPLEAEGIATKWSIELVFSPIHGIDQAGELAELFSRPLRRRELIRQALNPPSSALIDSDPVHA</sequence>
<reference key="1">
    <citation type="journal article" date="2006" name="Proc. Natl. Acad. Sci. U.S.A.">
        <title>Genome sequence of Synechococcus CC9311: insights into adaptation to a coastal environment.</title>
        <authorList>
            <person name="Palenik B."/>
            <person name="Ren Q."/>
            <person name="Dupont C.L."/>
            <person name="Myers G.S."/>
            <person name="Heidelberg J.F."/>
            <person name="Badger J.H."/>
            <person name="Madupu R."/>
            <person name="Nelson W.C."/>
            <person name="Brinkac L.M."/>
            <person name="Dodson R.J."/>
            <person name="Durkin A.S."/>
            <person name="Daugherty S.C."/>
            <person name="Sullivan S.A."/>
            <person name="Khouri H."/>
            <person name="Mohamoud Y."/>
            <person name="Halpin R."/>
            <person name="Paulsen I.T."/>
        </authorList>
    </citation>
    <scope>NUCLEOTIDE SEQUENCE [LARGE SCALE GENOMIC DNA]</scope>
    <source>
        <strain>CC9311</strain>
    </source>
</reference>
<comment type="function">
    <text evidence="1">Component of the dark-operative protochlorophyllide reductase (DPOR) that uses Mg-ATP and reduced ferredoxin to reduce ring D of protochlorophyllide (Pchlide) to form chlorophyllide a (Chlide). This reaction is light-independent. The NB-protein (ChlN-ChlB) is the catalytic component of the complex.</text>
</comment>
<comment type="catalytic activity">
    <reaction evidence="1">
        <text>chlorophyllide a + oxidized 2[4Fe-4S]-[ferredoxin] + 2 ADP + 2 phosphate = protochlorophyllide a + reduced 2[4Fe-4S]-[ferredoxin] + 2 ATP + 2 H2O</text>
        <dbReference type="Rhea" id="RHEA:28202"/>
        <dbReference type="Rhea" id="RHEA-COMP:10002"/>
        <dbReference type="Rhea" id="RHEA-COMP:10004"/>
        <dbReference type="ChEBI" id="CHEBI:15377"/>
        <dbReference type="ChEBI" id="CHEBI:30616"/>
        <dbReference type="ChEBI" id="CHEBI:33722"/>
        <dbReference type="ChEBI" id="CHEBI:33723"/>
        <dbReference type="ChEBI" id="CHEBI:43474"/>
        <dbReference type="ChEBI" id="CHEBI:83348"/>
        <dbReference type="ChEBI" id="CHEBI:83350"/>
        <dbReference type="ChEBI" id="CHEBI:456216"/>
        <dbReference type="EC" id="1.3.7.7"/>
    </reaction>
</comment>
<comment type="cofactor">
    <cofactor evidence="1">
        <name>[4Fe-4S] cluster</name>
        <dbReference type="ChEBI" id="CHEBI:49883"/>
    </cofactor>
    <text evidence="1">Binds 1 [4Fe-4S] cluster per heterodimer. The cluster is bound at the heterodimer interface by residues from both subunits.</text>
</comment>
<comment type="pathway">
    <text evidence="1">Porphyrin-containing compound metabolism; chlorophyll biosynthesis (light-independent).</text>
</comment>
<comment type="subunit">
    <text evidence="1">Protochlorophyllide reductase is composed of three subunits; ChlL, ChlN and ChlB. Forms a heterotetramer of two ChlB and two ChlN subunits.</text>
</comment>
<comment type="similarity">
    <text evidence="1">Belongs to the BchN/ChlN family.</text>
</comment>
<protein>
    <recommendedName>
        <fullName evidence="1">Light-independent protochlorophyllide reductase subunit N</fullName>
        <shortName evidence="1">DPOR subunit N</shortName>
        <shortName evidence="1">LI-POR subunit N</shortName>
        <ecNumber evidence="1">1.3.7.7</ecNumber>
    </recommendedName>
</protein>
<dbReference type="EC" id="1.3.7.7" evidence="1"/>
<dbReference type="EMBL" id="CP000435">
    <property type="protein sequence ID" value="ABI47763.1"/>
    <property type="molecule type" value="Genomic_DNA"/>
</dbReference>
<dbReference type="RefSeq" id="WP_011619888.1">
    <property type="nucleotide sequence ID" value="NC_008319.1"/>
</dbReference>
<dbReference type="SMR" id="Q0I8P6"/>
<dbReference type="STRING" id="64471.sync_1973"/>
<dbReference type="KEGG" id="syg:sync_1973"/>
<dbReference type="eggNOG" id="COG2710">
    <property type="taxonomic scope" value="Bacteria"/>
</dbReference>
<dbReference type="HOGENOM" id="CLU_037170_0_0_3"/>
<dbReference type="OrthoDB" id="5714774at2"/>
<dbReference type="UniPathway" id="UPA00670"/>
<dbReference type="Proteomes" id="UP000001961">
    <property type="component" value="Chromosome"/>
</dbReference>
<dbReference type="GO" id="GO:0051539">
    <property type="term" value="F:4 iron, 4 sulfur cluster binding"/>
    <property type="evidence" value="ECO:0007669"/>
    <property type="project" value="UniProtKB-UniRule"/>
</dbReference>
<dbReference type="GO" id="GO:0005524">
    <property type="term" value="F:ATP binding"/>
    <property type="evidence" value="ECO:0007669"/>
    <property type="project" value="UniProtKB-UniRule"/>
</dbReference>
<dbReference type="GO" id="GO:0046872">
    <property type="term" value="F:metal ion binding"/>
    <property type="evidence" value="ECO:0007669"/>
    <property type="project" value="UniProtKB-KW"/>
</dbReference>
<dbReference type="GO" id="GO:0016730">
    <property type="term" value="F:oxidoreductase activity, acting on iron-sulfur proteins as donors"/>
    <property type="evidence" value="ECO:0007669"/>
    <property type="project" value="InterPro"/>
</dbReference>
<dbReference type="GO" id="GO:0016636">
    <property type="term" value="F:oxidoreductase activity, acting on the CH-CH group of donors, iron-sulfur protein as acceptor"/>
    <property type="evidence" value="ECO:0007669"/>
    <property type="project" value="UniProtKB-UniRule"/>
</dbReference>
<dbReference type="GO" id="GO:0036068">
    <property type="term" value="P:light-independent chlorophyll biosynthetic process"/>
    <property type="evidence" value="ECO:0007669"/>
    <property type="project" value="UniProtKB-UniRule"/>
</dbReference>
<dbReference type="GO" id="GO:0019685">
    <property type="term" value="P:photosynthesis, dark reaction"/>
    <property type="evidence" value="ECO:0007669"/>
    <property type="project" value="InterPro"/>
</dbReference>
<dbReference type="Gene3D" id="3.40.50.1980">
    <property type="entry name" value="Nitrogenase molybdenum iron protein domain"/>
    <property type="match status" value="3"/>
</dbReference>
<dbReference type="HAMAP" id="MF_00352">
    <property type="entry name" value="ChlN_BchN"/>
    <property type="match status" value="1"/>
</dbReference>
<dbReference type="InterPro" id="IPR050293">
    <property type="entry name" value="LIPOR_BchN/ChlN"/>
</dbReference>
<dbReference type="InterPro" id="IPR000510">
    <property type="entry name" value="Nase/OxRdtase_comp1"/>
</dbReference>
<dbReference type="InterPro" id="IPR005970">
    <property type="entry name" value="Protochl_reductN"/>
</dbReference>
<dbReference type="NCBIfam" id="TIGR01279">
    <property type="entry name" value="DPOR_bchN"/>
    <property type="match status" value="1"/>
</dbReference>
<dbReference type="NCBIfam" id="NF002768">
    <property type="entry name" value="PRK02842.1"/>
    <property type="match status" value="1"/>
</dbReference>
<dbReference type="PANTHER" id="PTHR39429">
    <property type="entry name" value="LIGHT-INDEPENDENT PROTOCHLOROPHYLLIDE REDUCTASE SUBUNIT N"/>
    <property type="match status" value="1"/>
</dbReference>
<dbReference type="PANTHER" id="PTHR39429:SF3">
    <property type="entry name" value="LIGHT-INDEPENDENT PROTOCHLOROPHYLLIDE REDUCTASE SUBUNIT N"/>
    <property type="match status" value="1"/>
</dbReference>
<dbReference type="Pfam" id="PF00148">
    <property type="entry name" value="Oxidored_nitro"/>
    <property type="match status" value="1"/>
</dbReference>
<dbReference type="PIRSF" id="PIRSF000162">
    <property type="entry name" value="P_chlorophyll_rd"/>
    <property type="match status" value="1"/>
</dbReference>
<dbReference type="SUPFAM" id="SSF53807">
    <property type="entry name" value="Helical backbone' metal receptor"/>
    <property type="match status" value="1"/>
</dbReference>
<name>CHLN_SYNS3</name>
<accession>Q0I8P6</accession>
<evidence type="ECO:0000255" key="1">
    <source>
        <dbReference type="HAMAP-Rule" id="MF_00352"/>
    </source>
</evidence>
<proteinExistence type="inferred from homology"/>
<organism>
    <name type="scientific">Synechococcus sp. (strain CC9311)</name>
    <dbReference type="NCBI Taxonomy" id="64471"/>
    <lineage>
        <taxon>Bacteria</taxon>
        <taxon>Bacillati</taxon>
        <taxon>Cyanobacteriota</taxon>
        <taxon>Cyanophyceae</taxon>
        <taxon>Synechococcales</taxon>
        <taxon>Synechococcaceae</taxon>
        <taxon>Synechococcus</taxon>
    </lineage>
</organism>
<gene>
    <name evidence="1" type="primary">chlN</name>
    <name type="ordered locus">sync_1973</name>
</gene>
<feature type="chain" id="PRO_0000324026" description="Light-independent protochlorophyllide reductase subunit N">
    <location>
        <begin position="1"/>
        <end position="428"/>
    </location>
</feature>
<feature type="binding site" evidence="1">
    <location>
        <position position="16"/>
    </location>
    <ligand>
        <name>[4Fe-4S] cluster</name>
        <dbReference type="ChEBI" id="CHEBI:49883"/>
        <note>ligand shared with heterodimeric partner</note>
    </ligand>
</feature>
<feature type="binding site" evidence="1">
    <location>
        <position position="41"/>
    </location>
    <ligand>
        <name>[4Fe-4S] cluster</name>
        <dbReference type="ChEBI" id="CHEBI:49883"/>
        <note>ligand shared with heterodimeric partner</note>
    </ligand>
</feature>
<feature type="binding site" evidence="1">
    <location>
        <position position="102"/>
    </location>
    <ligand>
        <name>[4Fe-4S] cluster</name>
        <dbReference type="ChEBI" id="CHEBI:49883"/>
        <note>ligand shared with heterodimeric partner</note>
    </ligand>
</feature>
<keyword id="KW-0004">4Fe-4S</keyword>
<keyword id="KW-0067">ATP-binding</keyword>
<keyword id="KW-0149">Chlorophyll biosynthesis</keyword>
<keyword id="KW-0408">Iron</keyword>
<keyword id="KW-0411">Iron-sulfur</keyword>
<keyword id="KW-0479">Metal-binding</keyword>
<keyword id="KW-0547">Nucleotide-binding</keyword>
<keyword id="KW-0560">Oxidoreductase</keyword>
<keyword id="KW-0602">Photosynthesis</keyword>
<keyword id="KW-1185">Reference proteome</keyword>